<reference key="1">
    <citation type="journal article" date="2020" name="Chem. Commun. (Camb.)">
        <title>Biosynthesis of oxygenated brasilane terpene glycosides involves a promiscuous N-acetylglucosamine transferase.</title>
        <authorList>
            <person name="Feng J."/>
            <person name="Surup F."/>
            <person name="Hauser M."/>
            <person name="Miller A."/>
            <person name="Wennrich J.P."/>
            <person name="Stadler M."/>
            <person name="Cox R.J."/>
            <person name="Kuhnert E."/>
        </authorList>
    </citation>
    <scope>NUCLEOTIDE SEQUENCE [GENOMIC DNA]</scope>
    <scope>FUNCTION</scope>
    <source>
        <strain>DSM 103480 / CBS 140778</strain>
    </source>
</reference>
<accession>P9WER3</accession>
<accession>A0A866WLG1</accession>
<comment type="function">
    <text evidence="3">Part of the gene cluster that mediates the biosynthesis of the brasilane terpene glycosides brasilane D and E (PubMed:32936132). The biosynthesis starts with the activity of the terpene cyclase braA that converts farnesyl pyrophosphate into the sesquiterpene alcohol trichobrasilenol (PubMed:32936132). Subsequently, trichobrasilenol is glycosylated by the O-glycosyltransferase braB putatively using UDP-GlcNAc as sugar donor to yield brasilane A (PubMed:32936132). The latter then undergoes two rounds of oxidation performed by the cytochrome P450 monooxygenase braC (PubMed:32936132). In the first round braC hydroxylates C-12 forming brasilane D, which serves as substrate in the second round to establish the epoxide at the bond between C-5 and C-10 and oxidize the alcohol at C-12 to an aldehyde leading to the final product brasilane E (PubMed:32936132).</text>
</comment>
<protein>
    <recommendedName>
        <fullName evidence="4">Brasilane terpene glycosides biosynthesis cluster protein D</fullName>
    </recommendedName>
</protein>
<organism>
    <name type="scientific">Annulohypoxylon truncatum</name>
    <name type="common">Hypoxylon truncatum</name>
    <dbReference type="NCBI Taxonomy" id="327061"/>
    <lineage>
        <taxon>Eukaryota</taxon>
        <taxon>Fungi</taxon>
        <taxon>Dikarya</taxon>
        <taxon>Ascomycota</taxon>
        <taxon>Pezizomycotina</taxon>
        <taxon>Sordariomycetes</taxon>
        <taxon>Xylariomycetidae</taxon>
        <taxon>Xylariales</taxon>
        <taxon>Hypoxylaceae</taxon>
        <taxon>Annulohypoxylon</taxon>
    </lineage>
</organism>
<proteinExistence type="predicted"/>
<feature type="chain" id="PRO_0000453909" description="Brasilane terpene glycosides biosynthesis cluster protein D">
    <location>
        <begin position="1"/>
        <end position="245"/>
    </location>
</feature>
<feature type="zinc finger region" description="C3H1-type 1" evidence="1">
    <location>
        <begin position="121"/>
        <end position="152"/>
    </location>
</feature>
<feature type="zinc finger region" description="C3H1-type 2" evidence="1">
    <location>
        <begin position="161"/>
        <end position="185"/>
    </location>
</feature>
<feature type="region of interest" description="Disordered" evidence="2">
    <location>
        <begin position="186"/>
        <end position="245"/>
    </location>
</feature>
<feature type="compositionally biased region" description="Basic and acidic residues" evidence="2">
    <location>
        <begin position="209"/>
        <end position="226"/>
    </location>
</feature>
<dbReference type="EMBL" id="MT383109">
    <property type="protein sequence ID" value="QOE88886.1"/>
    <property type="molecule type" value="Genomic_DNA"/>
</dbReference>
<dbReference type="GO" id="GO:0008270">
    <property type="term" value="F:zinc ion binding"/>
    <property type="evidence" value="ECO:0007669"/>
    <property type="project" value="UniProtKB-KW"/>
</dbReference>
<dbReference type="Gene3D" id="4.10.1000.10">
    <property type="entry name" value="Zinc finger, CCCH-type"/>
    <property type="match status" value="1"/>
</dbReference>
<dbReference type="InterPro" id="IPR000571">
    <property type="entry name" value="Znf_CCCH"/>
</dbReference>
<dbReference type="PROSITE" id="PS50103">
    <property type="entry name" value="ZF_C3H1"/>
    <property type="match status" value="2"/>
</dbReference>
<gene>
    <name evidence="4" type="primary">braD</name>
</gene>
<name>BRAD_ANNTR</name>
<sequence>MSSDLVSKGMAQVFTGLGILLGAGRISSETHEEIMALLSADPGSNTGIMTGTNTGSTSIIPTQSKRVDMGDIPAGLPRPGKETPVSIQSHDLLGLGADLSTEAVQPPETFRAQASPSAPSKELKIICPWWLTDGYSCREHDQGKCPFYHDNVAGGVKHPLICHFWADGGRCTKSQKDCRFAHYPAPHRVTAPMPSKKKSKKLRSSVADDASHPDLGKARRHDPRDDEQNDEVWRNQGRARPGQEW</sequence>
<keyword id="KW-0479">Metal-binding</keyword>
<keyword id="KW-0677">Repeat</keyword>
<keyword id="KW-0862">Zinc</keyword>
<keyword id="KW-0863">Zinc-finger</keyword>
<evidence type="ECO:0000255" key="1">
    <source>
        <dbReference type="PROSITE-ProRule" id="PRU00723"/>
    </source>
</evidence>
<evidence type="ECO:0000256" key="2">
    <source>
        <dbReference type="SAM" id="MobiDB-lite"/>
    </source>
</evidence>
<evidence type="ECO:0000269" key="3">
    <source>
    </source>
</evidence>
<evidence type="ECO:0000303" key="4">
    <source>
    </source>
</evidence>